<protein>
    <recommendedName>
        <fullName evidence="1">Acetyl-coenzyme A carboxylase carboxyl transferase subunit alpha</fullName>
        <shortName evidence="1">ACCase subunit alpha</shortName>
        <shortName evidence="1">Acetyl-CoA carboxylase carboxyltransferase subunit alpha</shortName>
        <ecNumber evidence="1">2.1.3.15</ecNumber>
    </recommendedName>
</protein>
<gene>
    <name evidence="1" type="primary">accA</name>
    <name type="ordered locus">Pnec_0978</name>
</gene>
<comment type="function">
    <text evidence="1">Component of the acetyl coenzyme A carboxylase (ACC) complex. First, biotin carboxylase catalyzes the carboxylation of biotin on its carrier protein (BCCP) and then the CO(2) group is transferred by the carboxyltransferase to acetyl-CoA to form malonyl-CoA.</text>
</comment>
<comment type="catalytic activity">
    <reaction evidence="1">
        <text>N(6)-carboxybiotinyl-L-lysyl-[protein] + acetyl-CoA = N(6)-biotinyl-L-lysyl-[protein] + malonyl-CoA</text>
        <dbReference type="Rhea" id="RHEA:54728"/>
        <dbReference type="Rhea" id="RHEA-COMP:10505"/>
        <dbReference type="Rhea" id="RHEA-COMP:10506"/>
        <dbReference type="ChEBI" id="CHEBI:57288"/>
        <dbReference type="ChEBI" id="CHEBI:57384"/>
        <dbReference type="ChEBI" id="CHEBI:83144"/>
        <dbReference type="ChEBI" id="CHEBI:83145"/>
        <dbReference type="EC" id="2.1.3.15"/>
    </reaction>
</comment>
<comment type="pathway">
    <text evidence="1">Lipid metabolism; malonyl-CoA biosynthesis; malonyl-CoA from acetyl-CoA: step 1/1.</text>
</comment>
<comment type="subunit">
    <text evidence="1">Acetyl-CoA carboxylase is a heterohexamer composed of biotin carboxyl carrier protein (AccB), biotin carboxylase (AccC) and two subunits each of ACCase subunit alpha (AccA) and ACCase subunit beta (AccD).</text>
</comment>
<comment type="subcellular location">
    <subcellularLocation>
        <location evidence="1">Cytoplasm</location>
    </subcellularLocation>
</comment>
<comment type="similarity">
    <text evidence="1">Belongs to the AccA family.</text>
</comment>
<evidence type="ECO:0000255" key="1">
    <source>
        <dbReference type="HAMAP-Rule" id="MF_00823"/>
    </source>
</evidence>
<evidence type="ECO:0000255" key="2">
    <source>
        <dbReference type="PROSITE-ProRule" id="PRU01137"/>
    </source>
</evidence>
<sequence>MKTTFLDFEQQIAELESKIEELRFVQDESSVDISDEIKMLAEKSLQLTKDVYANLTPWQVSQVARHPQRPYTLDYVGALFTDFHELHGDRTFADDQSIIGGLARFENQPCMVIGHQKGRDTKERALRNFGMSRPEGYRKAMRLMRLAEKFGIPVFTFVDTPGAFPGIDAEERNQSEAIGRNLYVQAELEVPIIATIIGEGGSGGALAIAMGDAVLMLQNSTYSVISPEGCASILWKTADKASEAAEQLGLTAQRLKALGLIDKIVAEPIGGAHRDYDGMMSNMRKALAESLKTFDGMKVDALLDRRHERLMSYGKFKEITAKS</sequence>
<name>ACCA_POLNS</name>
<keyword id="KW-0067">ATP-binding</keyword>
<keyword id="KW-0963">Cytoplasm</keyword>
<keyword id="KW-0275">Fatty acid biosynthesis</keyword>
<keyword id="KW-0276">Fatty acid metabolism</keyword>
<keyword id="KW-0444">Lipid biosynthesis</keyword>
<keyword id="KW-0443">Lipid metabolism</keyword>
<keyword id="KW-0547">Nucleotide-binding</keyword>
<keyword id="KW-0808">Transferase</keyword>
<organism>
    <name type="scientific">Polynucleobacter necessarius subsp. necessarius (strain STIR1)</name>
    <dbReference type="NCBI Taxonomy" id="452638"/>
    <lineage>
        <taxon>Bacteria</taxon>
        <taxon>Pseudomonadati</taxon>
        <taxon>Pseudomonadota</taxon>
        <taxon>Betaproteobacteria</taxon>
        <taxon>Burkholderiales</taxon>
        <taxon>Burkholderiaceae</taxon>
        <taxon>Polynucleobacter</taxon>
    </lineage>
</organism>
<accession>B1XUY6</accession>
<reference key="1">
    <citation type="journal article" date="2013" name="Proc. Natl. Acad. Sci. U.S.A.">
        <title>Polynucleobacter necessarius, a model for genome reduction in both free-living and symbiotic bacteria.</title>
        <authorList>
            <person name="Boscaro V."/>
            <person name="Felletti M."/>
            <person name="Vannini C."/>
            <person name="Ackerman M.S."/>
            <person name="Chain P.S."/>
            <person name="Malfatti S."/>
            <person name="Vergez L.M."/>
            <person name="Shin M."/>
            <person name="Doak T.G."/>
            <person name="Lynch M."/>
            <person name="Petroni G."/>
        </authorList>
    </citation>
    <scope>NUCLEOTIDE SEQUENCE [LARGE SCALE GENOMIC DNA]</scope>
    <source>
        <strain>STIR1</strain>
    </source>
</reference>
<dbReference type="EC" id="2.1.3.15" evidence="1"/>
<dbReference type="EMBL" id="CP001010">
    <property type="protein sequence ID" value="ACB44163.1"/>
    <property type="molecule type" value="Genomic_DNA"/>
</dbReference>
<dbReference type="SMR" id="B1XUY6"/>
<dbReference type="STRING" id="452638.Pnec_0978"/>
<dbReference type="KEGG" id="pne:Pnec_0978"/>
<dbReference type="eggNOG" id="COG0825">
    <property type="taxonomic scope" value="Bacteria"/>
</dbReference>
<dbReference type="HOGENOM" id="CLU_015486_0_2_4"/>
<dbReference type="OrthoDB" id="9808023at2"/>
<dbReference type="UniPathway" id="UPA00655">
    <property type="reaction ID" value="UER00711"/>
</dbReference>
<dbReference type="GO" id="GO:0009317">
    <property type="term" value="C:acetyl-CoA carboxylase complex"/>
    <property type="evidence" value="ECO:0007669"/>
    <property type="project" value="InterPro"/>
</dbReference>
<dbReference type="GO" id="GO:0003989">
    <property type="term" value="F:acetyl-CoA carboxylase activity"/>
    <property type="evidence" value="ECO:0007669"/>
    <property type="project" value="InterPro"/>
</dbReference>
<dbReference type="GO" id="GO:0005524">
    <property type="term" value="F:ATP binding"/>
    <property type="evidence" value="ECO:0007669"/>
    <property type="project" value="UniProtKB-KW"/>
</dbReference>
<dbReference type="GO" id="GO:0016743">
    <property type="term" value="F:carboxyl- or carbamoyltransferase activity"/>
    <property type="evidence" value="ECO:0007669"/>
    <property type="project" value="UniProtKB-UniRule"/>
</dbReference>
<dbReference type="GO" id="GO:0006633">
    <property type="term" value="P:fatty acid biosynthetic process"/>
    <property type="evidence" value="ECO:0007669"/>
    <property type="project" value="UniProtKB-KW"/>
</dbReference>
<dbReference type="GO" id="GO:2001295">
    <property type="term" value="P:malonyl-CoA biosynthetic process"/>
    <property type="evidence" value="ECO:0007669"/>
    <property type="project" value="UniProtKB-UniRule"/>
</dbReference>
<dbReference type="Gene3D" id="3.90.226.10">
    <property type="entry name" value="2-enoyl-CoA Hydratase, Chain A, domain 1"/>
    <property type="match status" value="1"/>
</dbReference>
<dbReference type="HAMAP" id="MF_00823">
    <property type="entry name" value="AcetylCoA_CT_alpha"/>
    <property type="match status" value="1"/>
</dbReference>
<dbReference type="InterPro" id="IPR001095">
    <property type="entry name" value="Acetyl_CoA_COase_a_su"/>
</dbReference>
<dbReference type="InterPro" id="IPR029045">
    <property type="entry name" value="ClpP/crotonase-like_dom_sf"/>
</dbReference>
<dbReference type="InterPro" id="IPR011763">
    <property type="entry name" value="COA_CT_C"/>
</dbReference>
<dbReference type="NCBIfam" id="TIGR00513">
    <property type="entry name" value="accA"/>
    <property type="match status" value="1"/>
</dbReference>
<dbReference type="NCBIfam" id="NF041504">
    <property type="entry name" value="AccA_sub"/>
    <property type="match status" value="1"/>
</dbReference>
<dbReference type="NCBIfam" id="NF004344">
    <property type="entry name" value="PRK05724.1"/>
    <property type="match status" value="1"/>
</dbReference>
<dbReference type="PANTHER" id="PTHR42853">
    <property type="entry name" value="ACETYL-COENZYME A CARBOXYLASE CARBOXYL TRANSFERASE SUBUNIT ALPHA"/>
    <property type="match status" value="1"/>
</dbReference>
<dbReference type="PANTHER" id="PTHR42853:SF3">
    <property type="entry name" value="ACETYL-COENZYME A CARBOXYLASE CARBOXYL TRANSFERASE SUBUNIT ALPHA, CHLOROPLASTIC"/>
    <property type="match status" value="1"/>
</dbReference>
<dbReference type="Pfam" id="PF03255">
    <property type="entry name" value="ACCA"/>
    <property type="match status" value="1"/>
</dbReference>
<dbReference type="PRINTS" id="PR01069">
    <property type="entry name" value="ACCCTRFRASEA"/>
</dbReference>
<dbReference type="SUPFAM" id="SSF52096">
    <property type="entry name" value="ClpP/crotonase"/>
    <property type="match status" value="1"/>
</dbReference>
<dbReference type="PROSITE" id="PS50989">
    <property type="entry name" value="COA_CT_CTER"/>
    <property type="match status" value="1"/>
</dbReference>
<proteinExistence type="inferred from homology"/>
<feature type="chain" id="PRO_1000134505" description="Acetyl-coenzyme A carboxylase carboxyl transferase subunit alpha">
    <location>
        <begin position="1"/>
        <end position="323"/>
    </location>
</feature>
<feature type="domain" description="CoA carboxyltransferase C-terminal" evidence="2">
    <location>
        <begin position="40"/>
        <end position="293"/>
    </location>
</feature>